<keyword id="KW-0004">4Fe-4S</keyword>
<keyword id="KW-0963">Cytoplasm</keyword>
<keyword id="KW-0408">Iron</keyword>
<keyword id="KW-0411">Iron-sulfur</keyword>
<keyword id="KW-0479">Metal-binding</keyword>
<keyword id="KW-1185">Reference proteome</keyword>
<keyword id="KW-0949">S-adenosyl-L-methionine</keyword>
<keyword id="KW-0808">Transferase</keyword>
<proteinExistence type="inferred from homology"/>
<gene>
    <name evidence="1" type="primary">rimO</name>
    <name type="ordered locus">BBta_4140</name>
</gene>
<organism>
    <name type="scientific">Bradyrhizobium sp. (strain BTAi1 / ATCC BAA-1182)</name>
    <dbReference type="NCBI Taxonomy" id="288000"/>
    <lineage>
        <taxon>Bacteria</taxon>
        <taxon>Pseudomonadati</taxon>
        <taxon>Pseudomonadota</taxon>
        <taxon>Alphaproteobacteria</taxon>
        <taxon>Hyphomicrobiales</taxon>
        <taxon>Nitrobacteraceae</taxon>
        <taxon>Bradyrhizobium</taxon>
    </lineage>
</organism>
<sequence length="441" mass="48697">MQQGSAPKISFVSLGCPKALVDSERIITRLRAEGYELARKHDGADVVIVNTCGFLDSAKQESLSAIGSAMAENGKVIVTGCMGAEPEQIEQAYPGVLSITGPQQYESVLEAVHRASPPIHNPHLDLVPPQGIKLTPRHYAYLKISEGCNNRCTFCIIPKLRGDLVSRPAADVLREAERLVAAGVKELLVISQDTSAYGLDLKYAESSWKDRSVRARFLDLARELGELGAWVRLHYVYPYPHVDEVVGLMAEGRVLPYLDIPFQHASPNVLKAMRRPAAQDKTLDRIKSWRAACPDLALRSTFIVGFPGETDADFAYLLDWLDEAEIDRLGCFKYEPVAGATSNALPDQVPDEVKQERWNALMARQQKISARRLKRKVGTRQQIIIDEVGPTVAKGRSKADAPEIDGSVYVSSRRPLRVGEIVTARIERADEYDLHGTVAGF</sequence>
<evidence type="ECO:0000255" key="1">
    <source>
        <dbReference type="HAMAP-Rule" id="MF_01865"/>
    </source>
</evidence>
<evidence type="ECO:0000255" key="2">
    <source>
        <dbReference type="PROSITE-ProRule" id="PRU01266"/>
    </source>
</evidence>
<accession>A5EJ58</accession>
<name>RIMO_BRASB</name>
<feature type="chain" id="PRO_0000374718" description="Ribosomal protein uS12 methylthiotransferase RimO">
    <location>
        <begin position="1"/>
        <end position="441"/>
    </location>
</feature>
<feature type="domain" description="MTTase N-terminal" evidence="1">
    <location>
        <begin position="7"/>
        <end position="117"/>
    </location>
</feature>
<feature type="domain" description="Radical SAM core" evidence="2">
    <location>
        <begin position="134"/>
        <end position="371"/>
    </location>
</feature>
<feature type="domain" description="TRAM" evidence="1">
    <location>
        <begin position="374"/>
        <end position="440"/>
    </location>
</feature>
<feature type="binding site" evidence="1">
    <location>
        <position position="16"/>
    </location>
    <ligand>
        <name>[4Fe-4S] cluster</name>
        <dbReference type="ChEBI" id="CHEBI:49883"/>
        <label>1</label>
    </ligand>
</feature>
<feature type="binding site" evidence="1">
    <location>
        <position position="52"/>
    </location>
    <ligand>
        <name>[4Fe-4S] cluster</name>
        <dbReference type="ChEBI" id="CHEBI:49883"/>
        <label>1</label>
    </ligand>
</feature>
<feature type="binding site" evidence="1">
    <location>
        <position position="81"/>
    </location>
    <ligand>
        <name>[4Fe-4S] cluster</name>
        <dbReference type="ChEBI" id="CHEBI:49883"/>
        <label>1</label>
    </ligand>
</feature>
<feature type="binding site" evidence="1">
    <location>
        <position position="148"/>
    </location>
    <ligand>
        <name>[4Fe-4S] cluster</name>
        <dbReference type="ChEBI" id="CHEBI:49883"/>
        <label>2</label>
        <note>4Fe-4S-S-AdoMet</note>
    </ligand>
</feature>
<feature type="binding site" evidence="1">
    <location>
        <position position="152"/>
    </location>
    <ligand>
        <name>[4Fe-4S] cluster</name>
        <dbReference type="ChEBI" id="CHEBI:49883"/>
        <label>2</label>
        <note>4Fe-4S-S-AdoMet</note>
    </ligand>
</feature>
<feature type="binding site" evidence="1">
    <location>
        <position position="155"/>
    </location>
    <ligand>
        <name>[4Fe-4S] cluster</name>
        <dbReference type="ChEBI" id="CHEBI:49883"/>
        <label>2</label>
        <note>4Fe-4S-S-AdoMet</note>
    </ligand>
</feature>
<protein>
    <recommendedName>
        <fullName evidence="1">Ribosomal protein uS12 methylthiotransferase RimO</fullName>
        <shortName evidence="1">uS12 MTTase</shortName>
        <shortName evidence="1">uS12 methylthiotransferase</shortName>
        <ecNumber evidence="1">2.8.4.4</ecNumber>
    </recommendedName>
    <alternativeName>
        <fullName evidence="1">Ribosomal protein uS12 (aspartate-C(3))-methylthiotransferase</fullName>
    </alternativeName>
    <alternativeName>
        <fullName evidence="1">Ribosome maturation factor RimO</fullName>
    </alternativeName>
</protein>
<dbReference type="EC" id="2.8.4.4" evidence="1"/>
<dbReference type="EMBL" id="CP000494">
    <property type="protein sequence ID" value="ABQ36202.1"/>
    <property type="molecule type" value="Genomic_DNA"/>
</dbReference>
<dbReference type="RefSeq" id="WP_012044203.1">
    <property type="nucleotide sequence ID" value="NC_009485.1"/>
</dbReference>
<dbReference type="SMR" id="A5EJ58"/>
<dbReference type="STRING" id="288000.BBta_4140"/>
<dbReference type="KEGG" id="bbt:BBta_4140"/>
<dbReference type="eggNOG" id="COG0621">
    <property type="taxonomic scope" value="Bacteria"/>
</dbReference>
<dbReference type="HOGENOM" id="CLU_018697_0_0_5"/>
<dbReference type="OrthoDB" id="9805215at2"/>
<dbReference type="Proteomes" id="UP000000246">
    <property type="component" value="Chromosome"/>
</dbReference>
<dbReference type="GO" id="GO:0005829">
    <property type="term" value="C:cytosol"/>
    <property type="evidence" value="ECO:0007669"/>
    <property type="project" value="TreeGrafter"/>
</dbReference>
<dbReference type="GO" id="GO:0051539">
    <property type="term" value="F:4 iron, 4 sulfur cluster binding"/>
    <property type="evidence" value="ECO:0007669"/>
    <property type="project" value="UniProtKB-UniRule"/>
</dbReference>
<dbReference type="GO" id="GO:0035599">
    <property type="term" value="F:aspartic acid methylthiotransferase activity"/>
    <property type="evidence" value="ECO:0007669"/>
    <property type="project" value="TreeGrafter"/>
</dbReference>
<dbReference type="GO" id="GO:0046872">
    <property type="term" value="F:metal ion binding"/>
    <property type="evidence" value="ECO:0007669"/>
    <property type="project" value="UniProtKB-KW"/>
</dbReference>
<dbReference type="GO" id="GO:0103039">
    <property type="term" value="F:protein methylthiotransferase activity"/>
    <property type="evidence" value="ECO:0007669"/>
    <property type="project" value="UniProtKB-EC"/>
</dbReference>
<dbReference type="GO" id="GO:0006400">
    <property type="term" value="P:tRNA modification"/>
    <property type="evidence" value="ECO:0007669"/>
    <property type="project" value="InterPro"/>
</dbReference>
<dbReference type="CDD" id="cd01335">
    <property type="entry name" value="Radical_SAM"/>
    <property type="match status" value="1"/>
</dbReference>
<dbReference type="FunFam" id="2.40.50.140:FF:000060">
    <property type="entry name" value="Ribosomal protein S12 methylthiotransferase RimO"/>
    <property type="match status" value="1"/>
</dbReference>
<dbReference type="FunFam" id="3.40.50.12160:FF:000002">
    <property type="entry name" value="Ribosomal protein S12 methylthiotransferase RimO"/>
    <property type="match status" value="1"/>
</dbReference>
<dbReference type="FunFam" id="3.80.30.20:FF:000001">
    <property type="entry name" value="tRNA-2-methylthio-N(6)-dimethylallyladenosine synthase 2"/>
    <property type="match status" value="1"/>
</dbReference>
<dbReference type="Gene3D" id="3.40.50.12160">
    <property type="entry name" value="Methylthiotransferase, N-terminal domain"/>
    <property type="match status" value="1"/>
</dbReference>
<dbReference type="Gene3D" id="2.40.50.140">
    <property type="entry name" value="Nucleic acid-binding proteins"/>
    <property type="match status" value="1"/>
</dbReference>
<dbReference type="Gene3D" id="3.80.30.20">
    <property type="entry name" value="tm_1862 like domain"/>
    <property type="match status" value="1"/>
</dbReference>
<dbReference type="HAMAP" id="MF_01865">
    <property type="entry name" value="MTTase_RimO"/>
    <property type="match status" value="1"/>
</dbReference>
<dbReference type="InterPro" id="IPR006638">
    <property type="entry name" value="Elp3/MiaA/NifB-like_rSAM"/>
</dbReference>
<dbReference type="InterPro" id="IPR005839">
    <property type="entry name" value="Methylthiotransferase"/>
</dbReference>
<dbReference type="InterPro" id="IPR020612">
    <property type="entry name" value="Methylthiotransferase_CS"/>
</dbReference>
<dbReference type="InterPro" id="IPR013848">
    <property type="entry name" value="Methylthiotransferase_N"/>
</dbReference>
<dbReference type="InterPro" id="IPR038135">
    <property type="entry name" value="Methylthiotransferase_N_sf"/>
</dbReference>
<dbReference type="InterPro" id="IPR012340">
    <property type="entry name" value="NA-bd_OB-fold"/>
</dbReference>
<dbReference type="InterPro" id="IPR005840">
    <property type="entry name" value="Ribosomal_uS12_MeSTrfase_RimO"/>
</dbReference>
<dbReference type="InterPro" id="IPR007197">
    <property type="entry name" value="rSAM"/>
</dbReference>
<dbReference type="InterPro" id="IPR023404">
    <property type="entry name" value="rSAM_horseshoe"/>
</dbReference>
<dbReference type="InterPro" id="IPR002792">
    <property type="entry name" value="TRAM_dom"/>
</dbReference>
<dbReference type="NCBIfam" id="TIGR01125">
    <property type="entry name" value="30S ribosomal protein S12 methylthiotransferase RimO"/>
    <property type="match status" value="1"/>
</dbReference>
<dbReference type="NCBIfam" id="TIGR00089">
    <property type="entry name" value="MiaB/RimO family radical SAM methylthiotransferase"/>
    <property type="match status" value="1"/>
</dbReference>
<dbReference type="PANTHER" id="PTHR43837">
    <property type="entry name" value="RIBOSOMAL PROTEIN S12 METHYLTHIOTRANSFERASE RIMO"/>
    <property type="match status" value="1"/>
</dbReference>
<dbReference type="PANTHER" id="PTHR43837:SF1">
    <property type="entry name" value="RIBOSOMAL PROTEIN US12 METHYLTHIOTRANSFERASE RIMO"/>
    <property type="match status" value="1"/>
</dbReference>
<dbReference type="Pfam" id="PF04055">
    <property type="entry name" value="Radical_SAM"/>
    <property type="match status" value="1"/>
</dbReference>
<dbReference type="Pfam" id="PF18693">
    <property type="entry name" value="TRAM_2"/>
    <property type="match status" value="1"/>
</dbReference>
<dbReference type="Pfam" id="PF00919">
    <property type="entry name" value="UPF0004"/>
    <property type="match status" value="1"/>
</dbReference>
<dbReference type="SFLD" id="SFLDG01082">
    <property type="entry name" value="B12-binding_domain_containing"/>
    <property type="match status" value="1"/>
</dbReference>
<dbReference type="SFLD" id="SFLDG01061">
    <property type="entry name" value="methylthiotransferase"/>
    <property type="match status" value="1"/>
</dbReference>
<dbReference type="SFLD" id="SFLDF00274">
    <property type="entry name" value="ribosomal_protein_S12_methylth"/>
    <property type="match status" value="1"/>
</dbReference>
<dbReference type="SMART" id="SM00729">
    <property type="entry name" value="Elp3"/>
    <property type="match status" value="1"/>
</dbReference>
<dbReference type="SUPFAM" id="SSF102114">
    <property type="entry name" value="Radical SAM enzymes"/>
    <property type="match status" value="1"/>
</dbReference>
<dbReference type="PROSITE" id="PS51449">
    <property type="entry name" value="MTTASE_N"/>
    <property type="match status" value="1"/>
</dbReference>
<dbReference type="PROSITE" id="PS01278">
    <property type="entry name" value="MTTASE_RADICAL"/>
    <property type="match status" value="1"/>
</dbReference>
<dbReference type="PROSITE" id="PS51918">
    <property type="entry name" value="RADICAL_SAM"/>
    <property type="match status" value="1"/>
</dbReference>
<dbReference type="PROSITE" id="PS50926">
    <property type="entry name" value="TRAM"/>
    <property type="match status" value="1"/>
</dbReference>
<comment type="function">
    <text evidence="1">Catalyzes the methylthiolation of an aspartic acid residue of ribosomal protein uS12.</text>
</comment>
<comment type="catalytic activity">
    <reaction evidence="1">
        <text>L-aspartate(89)-[ribosomal protein uS12]-hydrogen + (sulfur carrier)-SH + AH2 + 2 S-adenosyl-L-methionine = 3-methylsulfanyl-L-aspartate(89)-[ribosomal protein uS12]-hydrogen + (sulfur carrier)-H + 5'-deoxyadenosine + L-methionine + A + S-adenosyl-L-homocysteine + 2 H(+)</text>
        <dbReference type="Rhea" id="RHEA:37087"/>
        <dbReference type="Rhea" id="RHEA-COMP:10460"/>
        <dbReference type="Rhea" id="RHEA-COMP:10461"/>
        <dbReference type="Rhea" id="RHEA-COMP:14737"/>
        <dbReference type="Rhea" id="RHEA-COMP:14739"/>
        <dbReference type="ChEBI" id="CHEBI:13193"/>
        <dbReference type="ChEBI" id="CHEBI:15378"/>
        <dbReference type="ChEBI" id="CHEBI:17319"/>
        <dbReference type="ChEBI" id="CHEBI:17499"/>
        <dbReference type="ChEBI" id="CHEBI:29917"/>
        <dbReference type="ChEBI" id="CHEBI:29961"/>
        <dbReference type="ChEBI" id="CHEBI:57844"/>
        <dbReference type="ChEBI" id="CHEBI:57856"/>
        <dbReference type="ChEBI" id="CHEBI:59789"/>
        <dbReference type="ChEBI" id="CHEBI:64428"/>
        <dbReference type="ChEBI" id="CHEBI:73599"/>
        <dbReference type="EC" id="2.8.4.4"/>
    </reaction>
</comment>
<comment type="cofactor">
    <cofactor evidence="1">
        <name>[4Fe-4S] cluster</name>
        <dbReference type="ChEBI" id="CHEBI:49883"/>
    </cofactor>
    <text evidence="1">Binds 2 [4Fe-4S] clusters. One cluster is coordinated with 3 cysteines and an exchangeable S-adenosyl-L-methionine.</text>
</comment>
<comment type="subcellular location">
    <subcellularLocation>
        <location evidence="1">Cytoplasm</location>
    </subcellularLocation>
</comment>
<comment type="similarity">
    <text evidence="1">Belongs to the methylthiotransferase family. RimO subfamily.</text>
</comment>
<reference key="1">
    <citation type="journal article" date="2007" name="Science">
        <title>Legumes symbioses: absence of nod genes in photosynthetic bradyrhizobia.</title>
        <authorList>
            <person name="Giraud E."/>
            <person name="Moulin L."/>
            <person name="Vallenet D."/>
            <person name="Barbe V."/>
            <person name="Cytryn E."/>
            <person name="Avarre J.-C."/>
            <person name="Jaubert M."/>
            <person name="Simon D."/>
            <person name="Cartieaux F."/>
            <person name="Prin Y."/>
            <person name="Bena G."/>
            <person name="Hannibal L."/>
            <person name="Fardoux J."/>
            <person name="Kojadinovic M."/>
            <person name="Vuillet L."/>
            <person name="Lajus A."/>
            <person name="Cruveiller S."/>
            <person name="Rouy Z."/>
            <person name="Mangenot S."/>
            <person name="Segurens B."/>
            <person name="Dossat C."/>
            <person name="Franck W.L."/>
            <person name="Chang W.-S."/>
            <person name="Saunders E."/>
            <person name="Bruce D."/>
            <person name="Richardson P."/>
            <person name="Normand P."/>
            <person name="Dreyfus B."/>
            <person name="Pignol D."/>
            <person name="Stacey G."/>
            <person name="Emerich D."/>
            <person name="Vermeglio A."/>
            <person name="Medigue C."/>
            <person name="Sadowsky M."/>
        </authorList>
    </citation>
    <scope>NUCLEOTIDE SEQUENCE [LARGE SCALE GENOMIC DNA]</scope>
    <source>
        <strain>BTAi1 / ATCC BAA-1182</strain>
    </source>
</reference>